<feature type="transit peptide" description="Mitochondrion" evidence="2">
    <location>
        <begin position="1"/>
        <end status="unknown"/>
    </location>
</feature>
<feature type="chain" id="PRO_0000416496" description="Mitochondrial zinc maintenance protein 1, mitochondrial">
    <location>
        <begin status="unknown"/>
        <end position="100"/>
    </location>
</feature>
<keyword id="KW-0143">Chaperone</keyword>
<keyword id="KW-0496">Mitochondrion</keyword>
<keyword id="KW-1185">Reference proteome</keyword>
<keyword id="KW-0809">Transit peptide</keyword>
<name>MZM1_SCHPO</name>
<dbReference type="EMBL" id="CU329671">
    <property type="protein sequence ID" value="CCD31377.1"/>
    <property type="molecule type" value="Genomic_DNA"/>
</dbReference>
<dbReference type="RefSeq" id="XP_004001725.1">
    <property type="nucleotide sequence ID" value="XM_004001676.1"/>
</dbReference>
<dbReference type="SMR" id="G2TRP8"/>
<dbReference type="FunCoup" id="G2TRP8">
    <property type="interactions" value="89"/>
</dbReference>
<dbReference type="STRING" id="284812.G2TRP8"/>
<dbReference type="PaxDb" id="4896-SPBC30D10.21.1"/>
<dbReference type="EnsemblFungi" id="SPBC30D10.21.1">
    <property type="protein sequence ID" value="SPBC30D10.21.1:pep"/>
    <property type="gene ID" value="SPBC30D10.21"/>
</dbReference>
<dbReference type="PomBase" id="SPBC30D10.21"/>
<dbReference type="VEuPathDB" id="FungiDB:SPBC30D10.21"/>
<dbReference type="HOGENOM" id="CLU_147114_2_2_1"/>
<dbReference type="InParanoid" id="G2TRP8"/>
<dbReference type="OMA" id="KYKLRIH"/>
<dbReference type="Reactome" id="R-SPO-9865881">
    <property type="pathway name" value="Complex III assembly"/>
</dbReference>
<dbReference type="PRO" id="PR:G2TRP8"/>
<dbReference type="Proteomes" id="UP000002485">
    <property type="component" value="Chromosome II"/>
</dbReference>
<dbReference type="GO" id="GO:0005759">
    <property type="term" value="C:mitochondrial matrix"/>
    <property type="evidence" value="ECO:0000318"/>
    <property type="project" value="GO_Central"/>
</dbReference>
<dbReference type="GO" id="GO:0044183">
    <property type="term" value="F:protein folding chaperone"/>
    <property type="evidence" value="ECO:0000318"/>
    <property type="project" value="GO_Central"/>
</dbReference>
<dbReference type="GO" id="GO:0034551">
    <property type="term" value="P:mitochondrial respiratory chain complex III assembly"/>
    <property type="evidence" value="ECO:0000318"/>
    <property type="project" value="GO_Central"/>
</dbReference>
<dbReference type="CDD" id="cd20267">
    <property type="entry name" value="Complex1_LYR_LYRM7"/>
    <property type="match status" value="1"/>
</dbReference>
<dbReference type="InterPro" id="IPR045298">
    <property type="entry name" value="Complex1_LYR_LYRM7"/>
</dbReference>
<dbReference type="InterPro" id="IPR050435">
    <property type="entry name" value="MZM1/LYRM7"/>
</dbReference>
<dbReference type="PANTHER" id="PTHR46749">
    <property type="entry name" value="COMPLEX III ASSEMBLY FACTOR LYRM7"/>
    <property type="match status" value="1"/>
</dbReference>
<dbReference type="PANTHER" id="PTHR46749:SF1">
    <property type="entry name" value="COMPLEX III ASSEMBLY FACTOR LYRM7"/>
    <property type="match status" value="1"/>
</dbReference>
<gene>
    <name type="primary">new18</name>
    <name type="ORF">SPBC30D10.21</name>
</gene>
<protein>
    <recommendedName>
        <fullName>Mitochondrial zinc maintenance protein 1, mitochondrial</fullName>
    </recommendedName>
</protein>
<accession>G2TRP8</accession>
<evidence type="ECO:0000250" key="1"/>
<evidence type="ECO:0000255" key="2"/>
<evidence type="ECO:0000305" key="3"/>
<organism>
    <name type="scientific">Schizosaccharomyces pombe (strain 972 / ATCC 24843)</name>
    <name type="common">Fission yeast</name>
    <dbReference type="NCBI Taxonomy" id="284812"/>
    <lineage>
        <taxon>Eukaryota</taxon>
        <taxon>Fungi</taxon>
        <taxon>Dikarya</taxon>
        <taxon>Ascomycota</taxon>
        <taxon>Taphrinomycotina</taxon>
        <taxon>Schizosaccharomycetes</taxon>
        <taxon>Schizosaccharomycetales</taxon>
        <taxon>Schizosaccharomycetaceae</taxon>
        <taxon>Schizosaccharomyces</taxon>
    </lineage>
</organism>
<comment type="function">
    <text evidence="1">Assembly factor required for Rieske Fe-S protein RIP1 incorporation into the cytochrome b-c1 (CIII) complex. Functions as a chaperone, binding to this subunit within the mitochondrial matrix and stabilizing it prior to its translocation and insertion into the late CIII dimeric intermediate within the mitochondrial inner membrane. Modulates the mitochondrial matrix zinc pool (By similarity).</text>
</comment>
<comment type="subunit">
    <text evidence="1">Interacts with RIP1.</text>
</comment>
<comment type="subcellular location">
    <subcellularLocation>
        <location evidence="1">Mitochondrion matrix</location>
    </subcellularLocation>
</comment>
<comment type="similarity">
    <text evidence="3">Belongs to the complex I LYR family. MZM1 subfamily.</text>
</comment>
<proteinExistence type="evidence at transcript level"/>
<sequence>MSAAKQCFRNLWRASNSVFEGDPMILAAARDKIRTGFHNHRCCSPEEAKKEIQNGNAVAEILRRNVVQAEKQSNDTYSLKIRKTTEINTNRQFTEKKFPR</sequence>
<reference key="1">
    <citation type="journal article" date="2002" name="Nature">
        <title>The genome sequence of Schizosaccharomyces pombe.</title>
        <authorList>
            <person name="Wood V."/>
            <person name="Gwilliam R."/>
            <person name="Rajandream M.A."/>
            <person name="Lyne M.H."/>
            <person name="Lyne R."/>
            <person name="Stewart A."/>
            <person name="Sgouros J.G."/>
            <person name="Peat N."/>
            <person name="Hayles J."/>
            <person name="Baker S.G."/>
            <person name="Basham D."/>
            <person name="Bowman S."/>
            <person name="Brooks K."/>
            <person name="Brown D."/>
            <person name="Brown S."/>
            <person name="Chillingworth T."/>
            <person name="Churcher C.M."/>
            <person name="Collins M."/>
            <person name="Connor R."/>
            <person name="Cronin A."/>
            <person name="Davis P."/>
            <person name="Feltwell T."/>
            <person name="Fraser A."/>
            <person name="Gentles S."/>
            <person name="Goble A."/>
            <person name="Hamlin N."/>
            <person name="Harris D.E."/>
            <person name="Hidalgo J."/>
            <person name="Hodgson G."/>
            <person name="Holroyd S."/>
            <person name="Hornsby T."/>
            <person name="Howarth S."/>
            <person name="Huckle E.J."/>
            <person name="Hunt S."/>
            <person name="Jagels K."/>
            <person name="James K.D."/>
            <person name="Jones L."/>
            <person name="Jones M."/>
            <person name="Leather S."/>
            <person name="McDonald S."/>
            <person name="McLean J."/>
            <person name="Mooney P."/>
            <person name="Moule S."/>
            <person name="Mungall K.L."/>
            <person name="Murphy L.D."/>
            <person name="Niblett D."/>
            <person name="Odell C."/>
            <person name="Oliver K."/>
            <person name="O'Neil S."/>
            <person name="Pearson D."/>
            <person name="Quail M.A."/>
            <person name="Rabbinowitsch E."/>
            <person name="Rutherford K.M."/>
            <person name="Rutter S."/>
            <person name="Saunders D."/>
            <person name="Seeger K."/>
            <person name="Sharp S."/>
            <person name="Skelton J."/>
            <person name="Simmonds M.N."/>
            <person name="Squares R."/>
            <person name="Squares S."/>
            <person name="Stevens K."/>
            <person name="Taylor K."/>
            <person name="Taylor R.G."/>
            <person name="Tivey A."/>
            <person name="Walsh S.V."/>
            <person name="Warren T."/>
            <person name="Whitehead S."/>
            <person name="Woodward J.R."/>
            <person name="Volckaert G."/>
            <person name="Aert R."/>
            <person name="Robben J."/>
            <person name="Grymonprez B."/>
            <person name="Weltjens I."/>
            <person name="Vanstreels E."/>
            <person name="Rieger M."/>
            <person name="Schaefer M."/>
            <person name="Mueller-Auer S."/>
            <person name="Gabel C."/>
            <person name="Fuchs M."/>
            <person name="Duesterhoeft A."/>
            <person name="Fritzc C."/>
            <person name="Holzer E."/>
            <person name="Moestl D."/>
            <person name="Hilbert H."/>
            <person name="Borzym K."/>
            <person name="Langer I."/>
            <person name="Beck A."/>
            <person name="Lehrach H."/>
            <person name="Reinhardt R."/>
            <person name="Pohl T.M."/>
            <person name="Eger P."/>
            <person name="Zimmermann W."/>
            <person name="Wedler H."/>
            <person name="Wambutt R."/>
            <person name="Purnelle B."/>
            <person name="Goffeau A."/>
            <person name="Cadieu E."/>
            <person name="Dreano S."/>
            <person name="Gloux S."/>
            <person name="Lelaure V."/>
            <person name="Mottier S."/>
            <person name="Galibert F."/>
            <person name="Aves S.J."/>
            <person name="Xiang Z."/>
            <person name="Hunt C."/>
            <person name="Moore K."/>
            <person name="Hurst S.M."/>
            <person name="Lucas M."/>
            <person name="Rochet M."/>
            <person name="Gaillardin C."/>
            <person name="Tallada V.A."/>
            <person name="Garzon A."/>
            <person name="Thode G."/>
            <person name="Daga R.R."/>
            <person name="Cruzado L."/>
            <person name="Jimenez J."/>
            <person name="Sanchez M."/>
            <person name="del Rey F."/>
            <person name="Benito J."/>
            <person name="Dominguez A."/>
            <person name="Revuelta J.L."/>
            <person name="Moreno S."/>
            <person name="Armstrong J."/>
            <person name="Forsburg S.L."/>
            <person name="Cerutti L."/>
            <person name="Lowe T."/>
            <person name="McCombie W.R."/>
            <person name="Paulsen I."/>
            <person name="Potashkin J."/>
            <person name="Shpakovski G.V."/>
            <person name="Ussery D."/>
            <person name="Barrell B.G."/>
            <person name="Nurse P."/>
        </authorList>
    </citation>
    <scope>NUCLEOTIDE SEQUENCE [LARGE SCALE GENOMIC DNA]</scope>
    <source>
        <strain>972 / ATCC 24843</strain>
    </source>
</reference>
<reference key="2">
    <citation type="journal article" date="2011" name="Science">
        <title>Comparative functional genomics of the fission yeasts.</title>
        <authorList>
            <person name="Rhind N."/>
            <person name="Chen Z."/>
            <person name="Yassour M."/>
            <person name="Thompson D.A."/>
            <person name="Haas B.J."/>
            <person name="Habib N."/>
            <person name="Wapinski I."/>
            <person name="Roy S."/>
            <person name="Lin M.F."/>
            <person name="Heiman D.I."/>
            <person name="Young S.K."/>
            <person name="Furuya K."/>
            <person name="Guo Y."/>
            <person name="Pidoux A."/>
            <person name="Chen H.M."/>
            <person name="Robbertse B."/>
            <person name="Goldberg J.M."/>
            <person name="Aoki K."/>
            <person name="Bayne E.H."/>
            <person name="Berlin A.M."/>
            <person name="Desjardins C.A."/>
            <person name="Dobbs E."/>
            <person name="Dukaj L."/>
            <person name="Fan L."/>
            <person name="FitzGerald M.G."/>
            <person name="French C."/>
            <person name="Gujja S."/>
            <person name="Hansen K."/>
            <person name="Keifenheim D."/>
            <person name="Levin J.Z."/>
            <person name="Mosher R.A."/>
            <person name="Mueller C.A."/>
            <person name="Pfiffner J."/>
            <person name="Priest M."/>
            <person name="Russ C."/>
            <person name="Smialowska A."/>
            <person name="Swoboda P."/>
            <person name="Sykes S.M."/>
            <person name="Vaughn M."/>
            <person name="Vengrova S."/>
            <person name="Yoder R."/>
            <person name="Zeng Q."/>
            <person name="Allshire R."/>
            <person name="Baulcombe D."/>
            <person name="Birren B.W."/>
            <person name="Brown W."/>
            <person name="Ekwall K."/>
            <person name="Kellis M."/>
            <person name="Leatherwood J."/>
            <person name="Levin H."/>
            <person name="Margalit H."/>
            <person name="Martienssen R."/>
            <person name="Nieduszynski C.A."/>
            <person name="Spatafora J.W."/>
            <person name="Friedman N."/>
            <person name="Dalgaard J.Z."/>
            <person name="Baumann P."/>
            <person name="Niki H."/>
            <person name="Regev A."/>
            <person name="Nusbaum C."/>
        </authorList>
    </citation>
    <scope>IDENTIFICATION</scope>
</reference>
<reference key="3">
    <citation type="journal article" date="2011" name="Genetics">
        <title>Augmented annotation of the Schizosaccharomyces pombe genome reveals additional genes required for growth and viability.</title>
        <authorList>
            <person name="Bitton D.A."/>
            <person name="Wood V."/>
            <person name="Scutt P.J."/>
            <person name="Grallert A."/>
            <person name="Yates T."/>
            <person name="Smith D.L."/>
            <person name="Hagan I.M."/>
            <person name="Miller C.J."/>
        </authorList>
    </citation>
    <scope>IDENTIFICATION</scope>
</reference>